<feature type="chain" id="PRO_1000082500" description="Ethanolamine ammonia-lyase small subunit">
    <location>
        <begin position="1"/>
        <end position="298"/>
    </location>
</feature>
<feature type="binding site" evidence="1">
    <location>
        <position position="210"/>
    </location>
    <ligand>
        <name>adenosylcob(III)alamin</name>
        <dbReference type="ChEBI" id="CHEBI:18408"/>
    </ligand>
</feature>
<feature type="binding site" evidence="1">
    <location>
        <position position="231"/>
    </location>
    <ligand>
        <name>adenosylcob(III)alamin</name>
        <dbReference type="ChEBI" id="CHEBI:18408"/>
    </ligand>
</feature>
<feature type="binding site" evidence="1">
    <location>
        <position position="261"/>
    </location>
    <ligand>
        <name>adenosylcob(III)alamin</name>
        <dbReference type="ChEBI" id="CHEBI:18408"/>
    </ligand>
</feature>
<name>EUTC_SALPB</name>
<gene>
    <name evidence="1" type="primary">eutC</name>
    <name type="ordered locus">SPAB_00496</name>
</gene>
<organism>
    <name type="scientific">Salmonella paratyphi B (strain ATCC BAA-1250 / SPB7)</name>
    <dbReference type="NCBI Taxonomy" id="1016998"/>
    <lineage>
        <taxon>Bacteria</taxon>
        <taxon>Pseudomonadati</taxon>
        <taxon>Pseudomonadota</taxon>
        <taxon>Gammaproteobacteria</taxon>
        <taxon>Enterobacterales</taxon>
        <taxon>Enterobacteriaceae</taxon>
        <taxon>Salmonella</taxon>
    </lineage>
</organism>
<proteinExistence type="inferred from homology"/>
<evidence type="ECO:0000255" key="1">
    <source>
        <dbReference type="HAMAP-Rule" id="MF_00601"/>
    </source>
</evidence>
<accession>A9N329</accession>
<sequence length="298" mass="32165">MDQKQIEEIVRSVMASMGQDVPQPVAPSTQEGAKPQCAAPTVTESCALDLGSAEAKAWIGVENPHRADVLTELRRSTAARVCTGRAGPRPRTQALLRFLADHSRSKDTVLKEVPEEWVKAQGLLEVRSEISDKNLYLTRPDMGRRLSPEAIDALKSQCVMNPDVQVVVSDGLSTDAITANYEEILPPLLAGLKQAGLNVGTPFFVRYGRVKIEDQIGEILGAKVVILLVGERPGLGQSESLSCYAVYSPRVATTVEADRTCISNIHQGGTPPVEAAAVIVDLAKRMLEQKASGINMTR</sequence>
<keyword id="KW-1283">Bacterial microcompartment</keyword>
<keyword id="KW-0846">Cobalamin</keyword>
<keyword id="KW-0170">Cobalt</keyword>
<keyword id="KW-0456">Lyase</keyword>
<protein>
    <recommendedName>
        <fullName evidence="1">Ethanolamine ammonia-lyase small subunit</fullName>
        <shortName evidence="1">EAL small subunit</shortName>
        <ecNumber evidence="1">4.3.1.7</ecNumber>
    </recommendedName>
</protein>
<reference key="1">
    <citation type="submission" date="2007-11" db="EMBL/GenBank/DDBJ databases">
        <authorList>
            <consortium name="The Salmonella enterica serovar Paratyphi B Genome Sequencing Project"/>
            <person name="McClelland M."/>
            <person name="Sanderson E.K."/>
            <person name="Porwollik S."/>
            <person name="Spieth J."/>
            <person name="Clifton W.S."/>
            <person name="Fulton R."/>
            <person name="Cordes M."/>
            <person name="Wollam A."/>
            <person name="Shah N."/>
            <person name="Pepin K."/>
            <person name="Bhonagiri V."/>
            <person name="Nash W."/>
            <person name="Johnson M."/>
            <person name="Thiruvilangam P."/>
            <person name="Wilson R."/>
        </authorList>
    </citation>
    <scope>NUCLEOTIDE SEQUENCE [LARGE SCALE GENOMIC DNA]</scope>
    <source>
        <strain>ATCC BAA-1250 / SPB7</strain>
    </source>
</reference>
<comment type="function">
    <text evidence="1">Catalyzes the deamination of various vicinal amino-alcohols to oxo compounds. Allows this organism to utilize ethanolamine as the sole source of nitrogen and carbon in the presence of external vitamin B12.</text>
</comment>
<comment type="catalytic activity">
    <reaction evidence="1">
        <text>ethanolamine = acetaldehyde + NH4(+)</text>
        <dbReference type="Rhea" id="RHEA:15313"/>
        <dbReference type="ChEBI" id="CHEBI:15343"/>
        <dbReference type="ChEBI" id="CHEBI:28938"/>
        <dbReference type="ChEBI" id="CHEBI:57603"/>
        <dbReference type="EC" id="4.3.1.7"/>
    </reaction>
</comment>
<comment type="cofactor">
    <cofactor evidence="1">
        <name>adenosylcob(III)alamin</name>
        <dbReference type="ChEBI" id="CHEBI:18408"/>
    </cofactor>
    <text evidence="1">Binds between the large and small subunits.</text>
</comment>
<comment type="pathway">
    <text evidence="1">Amine and polyamine degradation; ethanolamine degradation.</text>
</comment>
<comment type="subunit">
    <text evidence="1">The basic unit is a heterodimer which dimerizes to form tetramers. The heterotetramers trimerize; 6 large subunits form a core ring with 6 small subunits projecting outwards.</text>
</comment>
<comment type="subcellular location">
    <subcellularLocation>
        <location evidence="1">Bacterial microcompartment</location>
    </subcellularLocation>
</comment>
<comment type="similarity">
    <text evidence="1">Belongs to the EutC family.</text>
</comment>
<dbReference type="EC" id="4.3.1.7" evidence="1"/>
<dbReference type="EMBL" id="CP000886">
    <property type="protein sequence ID" value="ABX65929.1"/>
    <property type="molecule type" value="Genomic_DNA"/>
</dbReference>
<dbReference type="RefSeq" id="WP_000372354.1">
    <property type="nucleotide sequence ID" value="NC_010102.1"/>
</dbReference>
<dbReference type="SMR" id="A9N329"/>
<dbReference type="KEGG" id="spq:SPAB_00496"/>
<dbReference type="PATRIC" id="fig|1016998.12.peg.470"/>
<dbReference type="HOGENOM" id="CLU_068224_2_0_6"/>
<dbReference type="BioCyc" id="SENT1016998:SPAB_RS02025-MONOMER"/>
<dbReference type="UniPathway" id="UPA00560"/>
<dbReference type="Proteomes" id="UP000008556">
    <property type="component" value="Chromosome"/>
</dbReference>
<dbReference type="GO" id="GO:0009350">
    <property type="term" value="C:ethanolamine ammonia-lyase complex"/>
    <property type="evidence" value="ECO:0007669"/>
    <property type="project" value="UniProtKB-UniRule"/>
</dbReference>
<dbReference type="GO" id="GO:0031471">
    <property type="term" value="C:ethanolamine degradation polyhedral organelle"/>
    <property type="evidence" value="ECO:0007669"/>
    <property type="project" value="UniProtKB-UniRule"/>
</dbReference>
<dbReference type="GO" id="GO:0031419">
    <property type="term" value="F:cobalamin binding"/>
    <property type="evidence" value="ECO:0007669"/>
    <property type="project" value="UniProtKB-UniRule"/>
</dbReference>
<dbReference type="GO" id="GO:0008851">
    <property type="term" value="F:ethanolamine ammonia-lyase activity"/>
    <property type="evidence" value="ECO:0007669"/>
    <property type="project" value="UniProtKB-UniRule"/>
</dbReference>
<dbReference type="GO" id="GO:0006520">
    <property type="term" value="P:amino acid metabolic process"/>
    <property type="evidence" value="ECO:0007669"/>
    <property type="project" value="InterPro"/>
</dbReference>
<dbReference type="GO" id="GO:0046336">
    <property type="term" value="P:ethanolamine catabolic process"/>
    <property type="evidence" value="ECO:0007669"/>
    <property type="project" value="UniProtKB-UniRule"/>
</dbReference>
<dbReference type="FunFam" id="3.40.50.11240:FF:000001">
    <property type="entry name" value="Ethanolamine ammonia-lyase light chain"/>
    <property type="match status" value="1"/>
</dbReference>
<dbReference type="Gene3D" id="6.10.140.690">
    <property type="match status" value="1"/>
</dbReference>
<dbReference type="Gene3D" id="6.10.250.2060">
    <property type="match status" value="1"/>
</dbReference>
<dbReference type="Gene3D" id="3.40.50.11240">
    <property type="entry name" value="Ethanolamine ammonia-lyase light chain (EutC)"/>
    <property type="match status" value="1"/>
</dbReference>
<dbReference type="HAMAP" id="MF_00601">
    <property type="entry name" value="EutC"/>
    <property type="match status" value="1"/>
</dbReference>
<dbReference type="InterPro" id="IPR009246">
    <property type="entry name" value="EutC"/>
</dbReference>
<dbReference type="InterPro" id="IPR042251">
    <property type="entry name" value="EutC_C"/>
</dbReference>
<dbReference type="NCBIfam" id="NF003971">
    <property type="entry name" value="PRK05465.1"/>
    <property type="match status" value="1"/>
</dbReference>
<dbReference type="PANTHER" id="PTHR39330">
    <property type="entry name" value="ETHANOLAMINE AMMONIA-LYASE LIGHT CHAIN"/>
    <property type="match status" value="1"/>
</dbReference>
<dbReference type="PANTHER" id="PTHR39330:SF1">
    <property type="entry name" value="ETHANOLAMINE AMMONIA-LYASE SMALL SUBUNIT"/>
    <property type="match status" value="1"/>
</dbReference>
<dbReference type="Pfam" id="PF05985">
    <property type="entry name" value="EutC"/>
    <property type="match status" value="1"/>
</dbReference>
<dbReference type="PIRSF" id="PIRSF018982">
    <property type="entry name" value="EutC"/>
    <property type="match status" value="1"/>
</dbReference>